<reference key="1">
    <citation type="journal article" date="2013" name="Nature">
        <title>The zebrafish reference genome sequence and its relationship to the human genome.</title>
        <authorList>
            <person name="Howe K."/>
            <person name="Clark M.D."/>
            <person name="Torroja C.F."/>
            <person name="Torrance J."/>
            <person name="Berthelot C."/>
            <person name="Muffato M."/>
            <person name="Collins J.E."/>
            <person name="Humphray S."/>
            <person name="McLaren K."/>
            <person name="Matthews L."/>
            <person name="McLaren S."/>
            <person name="Sealy I."/>
            <person name="Caccamo M."/>
            <person name="Churcher C."/>
            <person name="Scott C."/>
            <person name="Barrett J.C."/>
            <person name="Koch R."/>
            <person name="Rauch G.J."/>
            <person name="White S."/>
            <person name="Chow W."/>
            <person name="Kilian B."/>
            <person name="Quintais L.T."/>
            <person name="Guerra-Assuncao J.A."/>
            <person name="Zhou Y."/>
            <person name="Gu Y."/>
            <person name="Yen J."/>
            <person name="Vogel J.H."/>
            <person name="Eyre T."/>
            <person name="Redmond S."/>
            <person name="Banerjee R."/>
            <person name="Chi J."/>
            <person name="Fu B."/>
            <person name="Langley E."/>
            <person name="Maguire S.F."/>
            <person name="Laird G.K."/>
            <person name="Lloyd D."/>
            <person name="Kenyon E."/>
            <person name="Donaldson S."/>
            <person name="Sehra H."/>
            <person name="Almeida-King J."/>
            <person name="Loveland J."/>
            <person name="Trevanion S."/>
            <person name="Jones M."/>
            <person name="Quail M."/>
            <person name="Willey D."/>
            <person name="Hunt A."/>
            <person name="Burton J."/>
            <person name="Sims S."/>
            <person name="McLay K."/>
            <person name="Plumb B."/>
            <person name="Davis J."/>
            <person name="Clee C."/>
            <person name="Oliver K."/>
            <person name="Clark R."/>
            <person name="Riddle C."/>
            <person name="Elliot D."/>
            <person name="Threadgold G."/>
            <person name="Harden G."/>
            <person name="Ware D."/>
            <person name="Begum S."/>
            <person name="Mortimore B."/>
            <person name="Kerry G."/>
            <person name="Heath P."/>
            <person name="Phillimore B."/>
            <person name="Tracey A."/>
            <person name="Corby N."/>
            <person name="Dunn M."/>
            <person name="Johnson C."/>
            <person name="Wood J."/>
            <person name="Clark S."/>
            <person name="Pelan S."/>
            <person name="Griffiths G."/>
            <person name="Smith M."/>
            <person name="Glithero R."/>
            <person name="Howden P."/>
            <person name="Barker N."/>
            <person name="Lloyd C."/>
            <person name="Stevens C."/>
            <person name="Harley J."/>
            <person name="Holt K."/>
            <person name="Panagiotidis G."/>
            <person name="Lovell J."/>
            <person name="Beasley H."/>
            <person name="Henderson C."/>
            <person name="Gordon D."/>
            <person name="Auger K."/>
            <person name="Wright D."/>
            <person name="Collins J."/>
            <person name="Raisen C."/>
            <person name="Dyer L."/>
            <person name="Leung K."/>
            <person name="Robertson L."/>
            <person name="Ambridge K."/>
            <person name="Leongamornlert D."/>
            <person name="McGuire S."/>
            <person name="Gilderthorp R."/>
            <person name="Griffiths C."/>
            <person name="Manthravadi D."/>
            <person name="Nichol S."/>
            <person name="Barker G."/>
            <person name="Whitehead S."/>
            <person name="Kay M."/>
            <person name="Brown J."/>
            <person name="Murnane C."/>
            <person name="Gray E."/>
            <person name="Humphries M."/>
            <person name="Sycamore N."/>
            <person name="Barker D."/>
            <person name="Saunders D."/>
            <person name="Wallis J."/>
            <person name="Babbage A."/>
            <person name="Hammond S."/>
            <person name="Mashreghi-Mohammadi M."/>
            <person name="Barr L."/>
            <person name="Martin S."/>
            <person name="Wray P."/>
            <person name="Ellington A."/>
            <person name="Matthews N."/>
            <person name="Ellwood M."/>
            <person name="Woodmansey R."/>
            <person name="Clark G."/>
            <person name="Cooper J."/>
            <person name="Tromans A."/>
            <person name="Grafham D."/>
            <person name="Skuce C."/>
            <person name="Pandian R."/>
            <person name="Andrews R."/>
            <person name="Harrison E."/>
            <person name="Kimberley A."/>
            <person name="Garnett J."/>
            <person name="Fosker N."/>
            <person name="Hall R."/>
            <person name="Garner P."/>
            <person name="Kelly D."/>
            <person name="Bird C."/>
            <person name="Palmer S."/>
            <person name="Gehring I."/>
            <person name="Berger A."/>
            <person name="Dooley C.M."/>
            <person name="Ersan-Urun Z."/>
            <person name="Eser C."/>
            <person name="Geiger H."/>
            <person name="Geisler M."/>
            <person name="Karotki L."/>
            <person name="Kirn A."/>
            <person name="Konantz J."/>
            <person name="Konantz M."/>
            <person name="Oberlander M."/>
            <person name="Rudolph-Geiger S."/>
            <person name="Teucke M."/>
            <person name="Lanz C."/>
            <person name="Raddatz G."/>
            <person name="Osoegawa K."/>
            <person name="Zhu B."/>
            <person name="Rapp A."/>
            <person name="Widaa S."/>
            <person name="Langford C."/>
            <person name="Yang F."/>
            <person name="Schuster S.C."/>
            <person name="Carter N.P."/>
            <person name="Harrow J."/>
            <person name="Ning Z."/>
            <person name="Herrero J."/>
            <person name="Searle S.M."/>
            <person name="Enright A."/>
            <person name="Geisler R."/>
            <person name="Plasterk R.H."/>
            <person name="Lee C."/>
            <person name="Westerfield M."/>
            <person name="de Jong P.J."/>
            <person name="Zon L.I."/>
            <person name="Postlethwait J.H."/>
            <person name="Nusslein-Volhard C."/>
            <person name="Hubbard T.J."/>
            <person name="Roest Crollius H."/>
            <person name="Rogers J."/>
            <person name="Stemple D.L."/>
        </authorList>
    </citation>
    <scope>NUCLEOTIDE SEQUENCE [LARGE SCALE GENOMIC DNA]</scope>
    <source>
        <strain>Tuebingen</strain>
    </source>
</reference>
<reference key="2">
    <citation type="journal article" date="2013" name="J. Clin. Invest.">
        <title>ADCK4 mutations promote steroid-resistant nephrotic syndrome through CoQ10 biosynthesis disruption.</title>
        <authorList>
            <person name="Ashraf S."/>
            <person name="Gee H.Y."/>
            <person name="Woerner S."/>
            <person name="Xie L.X."/>
            <person name="Vega-Warner V."/>
            <person name="Lovric S."/>
            <person name="Fang H."/>
            <person name="Song X."/>
            <person name="Cattran D.C."/>
            <person name="Avila-Casado C."/>
            <person name="Paterson A.D."/>
            <person name="Nitschke P."/>
            <person name="Bole-Feysot C."/>
            <person name="Cochat P."/>
            <person name="Esteve-Rudd J."/>
            <person name="Haberberger B."/>
            <person name="Allen S.J."/>
            <person name="Zhou W."/>
            <person name="Airik R."/>
            <person name="Otto E.A."/>
            <person name="Barua M."/>
            <person name="Al-Hamed M.H."/>
            <person name="Kari J.A."/>
            <person name="Evans J."/>
            <person name="Bierzynska A."/>
            <person name="Saleem M.A."/>
            <person name="Bockenhauer D."/>
            <person name="Kleta R."/>
            <person name="El Desoky S."/>
            <person name="Hacihamdioglu D.O."/>
            <person name="Gok F."/>
            <person name="Washburn J."/>
            <person name="Wiggins R.C."/>
            <person name="Choi M."/>
            <person name="Lifton R.P."/>
            <person name="Levy S."/>
            <person name="Han Z."/>
            <person name="Salviati L."/>
            <person name="Prokisch H."/>
            <person name="Williams D.S."/>
            <person name="Pollak M."/>
            <person name="Clarke C.F."/>
            <person name="Pei Y."/>
            <person name="Antignac C."/>
            <person name="Hildebrandt F."/>
        </authorList>
    </citation>
    <scope>DISRUPTION PHENOTYPE</scope>
</reference>
<protein>
    <recommendedName>
        <fullName evidence="6">Atypical kinase COQ8B, mitochondrial</fullName>
        <ecNumber evidence="1">2.7.-.-</ecNumber>
    </recommendedName>
    <alternativeName>
        <fullName evidence="2">AarF domain-containing protein kinase 4</fullName>
    </alternativeName>
    <alternativeName>
        <fullName evidence="2">Coenzyme Q protein 8B</fullName>
    </alternativeName>
</protein>
<keyword id="KW-0067">ATP-binding</keyword>
<keyword id="KW-1003">Cell membrane</keyword>
<keyword id="KW-0963">Cytoplasm</keyword>
<keyword id="KW-0418">Kinase</keyword>
<keyword id="KW-0472">Membrane</keyword>
<keyword id="KW-0496">Mitochondrion</keyword>
<keyword id="KW-0547">Nucleotide-binding</keyword>
<keyword id="KW-1185">Reference proteome</keyword>
<keyword id="KW-0808">Transferase</keyword>
<keyword id="KW-0812">Transmembrane</keyword>
<keyword id="KW-1133">Transmembrane helix</keyword>
<evidence type="ECO:0000250" key="1">
    <source>
        <dbReference type="UniProtKB" id="Q8NI60"/>
    </source>
</evidence>
<evidence type="ECO:0000250" key="2">
    <source>
        <dbReference type="UniProtKB" id="Q96D53"/>
    </source>
</evidence>
<evidence type="ECO:0000255" key="3"/>
<evidence type="ECO:0000256" key="4">
    <source>
        <dbReference type="SAM" id="MobiDB-lite"/>
    </source>
</evidence>
<evidence type="ECO:0000269" key="5">
    <source>
    </source>
</evidence>
<evidence type="ECO:0000305" key="6"/>
<comment type="function">
    <text evidence="1 2">Atypical kinase involved in the biosynthesis of coenzyme Q, also named ubiquinone, an essential lipid-soluble electron transporter for aerobic cellular respiration. Its substrate specificity is still unclear: may act as a protein kinase that mediates phosphorylation of COQ3 (By similarity). According to other reports, acts as a small molecule kinase, possibly a lipid kinase that phosphorylates a prenyl lipid in the ubiquinone biosynthesis pathway, as suggested by its ability to bind coenzyme Q lipid intermediates (By similarity). However, the small molecule kinase activity was not confirmed by another publication. Required for podocyte migration (By similarity).</text>
</comment>
<comment type="pathway">
    <text evidence="2">Cofactor biosynthesis; ubiquinone biosynthesis.</text>
</comment>
<comment type="subunit">
    <text evidence="2">Homodimer; homodimerizes via its transmembrane region. Interacts with the multi-subunit COQ enzyme complex.</text>
</comment>
<comment type="subcellular location">
    <subcellularLocation>
        <location evidence="2">Mitochondrion membrane</location>
        <topology evidence="2">Single-pass membrane protein</topology>
    </subcellularLocation>
    <subcellularLocation>
        <location evidence="2">Cytoplasm</location>
        <location evidence="2">Cytosol</location>
    </subcellularLocation>
    <subcellularLocation>
        <location evidence="2">Cell membrane</location>
    </subcellularLocation>
</comment>
<comment type="domain">
    <text evidence="1">Adopts an atypical protein kinase-like fold: while it adopts a core fold similar to that of well-characterized protein kinase-like domains. The KxGQ motif completely occludes the typical substrate binding pocket. Nucleotide-binding opens the substrate binding pocket and flips the active site from inside the hydrophobic core into a catalytically competent, solvent-exposed posture.</text>
</comment>
<comment type="disruption phenotype">
    <text evidence="5">Morpholino knockdown of the protein causes nephrosis phenotype of periorbital edema and total body edema in 54% of embryos at 120 hpf. The glomerular structures are altered, with podocyte foot process effacement and disorganization, rarefaction of slit membranes, and disorganization of the glomerular basement membranes.</text>
</comment>
<comment type="similarity">
    <text evidence="6">Belongs to the protein kinase superfamily. ADCK protein kinase family.</text>
</comment>
<accession>A3QJU3</accession>
<gene>
    <name evidence="2" type="primary">coq8b</name>
    <name evidence="2" type="synonym">adck4</name>
</gene>
<feature type="chain" id="PRO_0000425572" description="Atypical kinase COQ8B, mitochondrial">
    <location>
        <begin position="1"/>
        <end position="624"/>
    </location>
</feature>
<feature type="transmembrane region" description="Helical" evidence="3">
    <location>
        <begin position="189"/>
        <end position="205"/>
    </location>
</feature>
<feature type="domain" description="Protein kinase">
    <location>
        <begin position="285"/>
        <end position="517"/>
    </location>
</feature>
<feature type="region of interest" description="Disordered" evidence="4">
    <location>
        <begin position="90"/>
        <end position="117"/>
    </location>
</feature>
<feature type="short sequence motif" description="KxGQ motif" evidence="1">
    <location>
        <begin position="249"/>
        <end position="252"/>
    </location>
</feature>
<feature type="short sequence motif" description="AAAS motif" evidence="1">
    <location>
        <begin position="310"/>
        <end position="313"/>
    </location>
</feature>
<feature type="active site" description="Proton acceptor" evidence="1">
    <location>
        <position position="461"/>
    </location>
</feature>
<feature type="binding site" evidence="1">
    <location>
        <position position="313"/>
    </location>
    <ligand>
        <name>ATP</name>
        <dbReference type="ChEBI" id="CHEBI:30616"/>
    </ligand>
</feature>
<feature type="binding site" evidence="1">
    <location>
        <position position="331"/>
    </location>
    <ligand>
        <name>ATP</name>
        <dbReference type="ChEBI" id="CHEBI:30616"/>
    </ligand>
</feature>
<feature type="binding site" evidence="1">
    <location>
        <begin position="418"/>
        <end position="421"/>
    </location>
    <ligand>
        <name>ATP</name>
        <dbReference type="ChEBI" id="CHEBI:30616"/>
    </ligand>
</feature>
<feature type="binding site" evidence="1">
    <location>
        <position position="466"/>
    </location>
    <ligand>
        <name>ATP</name>
        <dbReference type="ChEBI" id="CHEBI:30616"/>
    </ligand>
</feature>
<feature type="binding site" evidence="1">
    <location>
        <position position="480"/>
    </location>
    <ligand>
        <name>ATP</name>
        <dbReference type="ChEBI" id="CHEBI:30616"/>
    </ligand>
</feature>
<name>COQ8B_DANRE</name>
<organism>
    <name type="scientific">Danio rerio</name>
    <name type="common">Zebrafish</name>
    <name type="synonym">Brachydanio rerio</name>
    <dbReference type="NCBI Taxonomy" id="7955"/>
    <lineage>
        <taxon>Eukaryota</taxon>
        <taxon>Metazoa</taxon>
        <taxon>Chordata</taxon>
        <taxon>Craniata</taxon>
        <taxon>Vertebrata</taxon>
        <taxon>Euteleostomi</taxon>
        <taxon>Actinopterygii</taxon>
        <taxon>Neopterygii</taxon>
        <taxon>Teleostei</taxon>
        <taxon>Ostariophysi</taxon>
        <taxon>Cypriniformes</taxon>
        <taxon>Danionidae</taxon>
        <taxon>Danioninae</taxon>
        <taxon>Danio</taxon>
    </lineage>
</organism>
<proteinExistence type="inferred from homology"/>
<sequence>MLLSEVLQVLRGAGKVGAAFTSTQGEQLRLMACNSTFGAGMKAAAEAVEGVMGTVMGGGDMTSKTDEFAGIEKWEEMDLDEAAKWSVASEMPPDFSSKDGRGETSETPVGAATGTIKGAGWPAQNTRFLHVSASQHHFRFVHDSIVARLSPEDIQRAREAKQNIARPVRQKLNERAKERKVPATRISRLANFGGLAVGLGIGAIAEVAKQSFGGKRSEVGALLDSPLLSEANAERIVNTLCKVRGAALKIGQMLSIQDNSFINPQLQKIFERVRQSADFMPAWQMHKVLEEELGSGWREKLSSIEEKPFAAASIGQVHHGVLPGGKEIAMKIQYPGVAESIHSDINNLMSVLKMSVVLPDGLFADSSLEVLQRELAWECDYEREAKCAKRFRNLLKGDPVFVVPEVFDELSARRVITMELVNGVPLDRCVDLDQETRNEICFNILQLCLRELFEFRFMQTDPNWSNFFYNSEQNKIFLLDFGACRDYPELFTDHYIEVVHAASVGDRATVLKKSKDLKFLTGFEAKAFEDAHVEAVMILGEAFASAEAFDFGTQSTTQRIQSLIPVMLRHRLTPPPEESYSLHRKMAGSFLICSKLKARFSCRNMFLDVYNAYKRQQQERRSQV</sequence>
<dbReference type="EC" id="2.7.-.-" evidence="1"/>
<dbReference type="EMBL" id="CR318657">
    <property type="status" value="NOT_ANNOTATED_CDS"/>
    <property type="molecule type" value="Genomic_DNA"/>
</dbReference>
<dbReference type="RefSeq" id="NP_001410931.1">
    <property type="nucleotide sequence ID" value="NM_001424002.1"/>
</dbReference>
<dbReference type="RefSeq" id="XP_001336310.1">
    <property type="nucleotide sequence ID" value="XM_001336274.7"/>
</dbReference>
<dbReference type="SMR" id="A3QJU3"/>
<dbReference type="FunCoup" id="A3QJU3">
    <property type="interactions" value="1129"/>
</dbReference>
<dbReference type="STRING" id="7955.ENSDARP00000132291"/>
<dbReference type="PaxDb" id="7955-ENSDARP00000115887"/>
<dbReference type="PeptideAtlas" id="A3QJU3"/>
<dbReference type="Ensembl" id="ENSDART00000172195">
    <property type="protein sequence ID" value="ENSDARP00000132291"/>
    <property type="gene ID" value="ENSDARG00000101130"/>
</dbReference>
<dbReference type="GeneID" id="799071"/>
<dbReference type="AGR" id="ZFIN:ZDB-GENE-060503-803"/>
<dbReference type="ZFIN" id="ZDB-GENE-060503-803">
    <property type="gene designation" value="coq8b"/>
</dbReference>
<dbReference type="eggNOG" id="KOG1234">
    <property type="taxonomic scope" value="Eukaryota"/>
</dbReference>
<dbReference type="HOGENOM" id="CLU_006533_9_0_1"/>
<dbReference type="InParanoid" id="A3QJU3"/>
<dbReference type="OMA" id="FRHANLF"/>
<dbReference type="OrthoDB" id="201153at2759"/>
<dbReference type="PhylomeDB" id="A3QJU3"/>
<dbReference type="Reactome" id="R-DRE-2142789">
    <property type="pathway name" value="Ubiquinol biosynthesis"/>
</dbReference>
<dbReference type="UniPathway" id="UPA00232"/>
<dbReference type="PRO" id="PR:A3QJU3"/>
<dbReference type="Proteomes" id="UP000000437">
    <property type="component" value="Alternate scaffold 15"/>
</dbReference>
<dbReference type="Proteomes" id="UP000000437">
    <property type="component" value="Chromosome 15"/>
</dbReference>
<dbReference type="Bgee" id="ENSDARG00000101130">
    <property type="expression patterns" value="Expressed in blastula and 22 other cell types or tissues"/>
</dbReference>
<dbReference type="GO" id="GO:0005829">
    <property type="term" value="C:cytosol"/>
    <property type="evidence" value="ECO:0007669"/>
    <property type="project" value="UniProtKB-SubCell"/>
</dbReference>
<dbReference type="GO" id="GO:0031966">
    <property type="term" value="C:mitochondrial membrane"/>
    <property type="evidence" value="ECO:0007669"/>
    <property type="project" value="UniProtKB-SubCell"/>
</dbReference>
<dbReference type="GO" id="GO:0005886">
    <property type="term" value="C:plasma membrane"/>
    <property type="evidence" value="ECO:0007669"/>
    <property type="project" value="UniProtKB-SubCell"/>
</dbReference>
<dbReference type="GO" id="GO:0005524">
    <property type="term" value="F:ATP binding"/>
    <property type="evidence" value="ECO:0007669"/>
    <property type="project" value="UniProtKB-KW"/>
</dbReference>
<dbReference type="GO" id="GO:0004672">
    <property type="term" value="F:protein kinase activity"/>
    <property type="evidence" value="ECO:0000250"/>
    <property type="project" value="UniProtKB"/>
</dbReference>
<dbReference type="GO" id="GO:0021692">
    <property type="term" value="P:cerebellar Purkinje cell layer morphogenesis"/>
    <property type="evidence" value="ECO:0000250"/>
    <property type="project" value="UniProtKB"/>
</dbReference>
<dbReference type="GO" id="GO:0032836">
    <property type="term" value="P:glomerular basement membrane development"/>
    <property type="evidence" value="ECO:0000315"/>
    <property type="project" value="ZFIN"/>
</dbReference>
<dbReference type="GO" id="GO:0072015">
    <property type="term" value="P:podocyte development"/>
    <property type="evidence" value="ECO:0000315"/>
    <property type="project" value="ZFIN"/>
</dbReference>
<dbReference type="GO" id="GO:0006744">
    <property type="term" value="P:ubiquinone biosynthetic process"/>
    <property type="evidence" value="ECO:0000250"/>
    <property type="project" value="UniProtKB"/>
</dbReference>
<dbReference type="CDD" id="cd13970">
    <property type="entry name" value="ABC1_ADCK3"/>
    <property type="match status" value="1"/>
</dbReference>
<dbReference type="InterPro" id="IPR004147">
    <property type="entry name" value="ABC1_dom"/>
</dbReference>
<dbReference type="InterPro" id="IPR034646">
    <property type="entry name" value="ADCK3_dom"/>
</dbReference>
<dbReference type="InterPro" id="IPR051409">
    <property type="entry name" value="Atypical_kinase_ADCK"/>
</dbReference>
<dbReference type="InterPro" id="IPR011009">
    <property type="entry name" value="Kinase-like_dom_sf"/>
</dbReference>
<dbReference type="PANTHER" id="PTHR43851">
    <property type="match status" value="1"/>
</dbReference>
<dbReference type="PANTHER" id="PTHR43851:SF4">
    <property type="entry name" value="ATYPICAL KINASE COQ8B, MITOCHONDRIAL"/>
    <property type="match status" value="1"/>
</dbReference>
<dbReference type="Pfam" id="PF03109">
    <property type="entry name" value="ABC1"/>
    <property type="match status" value="1"/>
</dbReference>
<dbReference type="SUPFAM" id="SSF56112">
    <property type="entry name" value="Protein kinase-like (PK-like)"/>
    <property type="match status" value="1"/>
</dbReference>